<comment type="function">
    <text evidence="1">Produces ATP from ADP in the presence of a proton gradient across the membrane. The catalytic sites are hosted primarily by the beta subunits.</text>
</comment>
<comment type="catalytic activity">
    <reaction evidence="1">
        <text>ATP + H2O + 4 H(+)(in) = ADP + phosphate + 5 H(+)(out)</text>
        <dbReference type="Rhea" id="RHEA:57720"/>
        <dbReference type="ChEBI" id="CHEBI:15377"/>
        <dbReference type="ChEBI" id="CHEBI:15378"/>
        <dbReference type="ChEBI" id="CHEBI:30616"/>
        <dbReference type="ChEBI" id="CHEBI:43474"/>
        <dbReference type="ChEBI" id="CHEBI:456216"/>
        <dbReference type="EC" id="7.1.2.2"/>
    </reaction>
</comment>
<comment type="subunit">
    <text evidence="1">F-type ATPases have 2 components, CF(1) - the catalytic core - and CF(0) - the membrane proton channel. CF(1) has five subunits: alpha(3), beta(3), gamma(1), delta(1), epsilon(1). CF(0) has three main subunits: a(1), b(2) and c(9-12). The alpha and beta chains form an alternating ring which encloses part of the gamma chain. CF(1) is attached to CF(0) by a central stalk formed by the gamma and epsilon chains, while a peripheral stalk is formed by the delta and b chains.</text>
</comment>
<comment type="subcellular location">
    <subcellularLocation>
        <location evidence="1">Cell inner membrane</location>
        <topology evidence="1">Peripheral membrane protein</topology>
    </subcellularLocation>
</comment>
<comment type="similarity">
    <text evidence="1">Belongs to the ATPase alpha/beta chains family.</text>
</comment>
<reference key="1">
    <citation type="journal article" date="2009" name="J. Bacteriol.">
        <title>Complete genome sequence of Haemophilus parasuis SH0165.</title>
        <authorList>
            <person name="Yue M."/>
            <person name="Yang F."/>
            <person name="Yang J."/>
            <person name="Bei W."/>
            <person name="Cai X."/>
            <person name="Chen L."/>
            <person name="Dong J."/>
            <person name="Zhou R."/>
            <person name="Jin M."/>
            <person name="Jin Q."/>
            <person name="Chen H."/>
        </authorList>
    </citation>
    <scope>NUCLEOTIDE SEQUENCE [LARGE SCALE GENOMIC DNA]</scope>
    <source>
        <strain>SH0165</strain>
    </source>
</reference>
<accession>B8F774</accession>
<dbReference type="EC" id="7.1.2.2" evidence="1"/>
<dbReference type="EMBL" id="CP001321">
    <property type="protein sequence ID" value="ACL33176.1"/>
    <property type="molecule type" value="Genomic_DNA"/>
</dbReference>
<dbReference type="RefSeq" id="WP_015939856.1">
    <property type="nucleotide sequence ID" value="NC_011852.1"/>
</dbReference>
<dbReference type="SMR" id="B8F774"/>
<dbReference type="STRING" id="557723.HAPS_1626"/>
<dbReference type="KEGG" id="hap:HAPS_1626"/>
<dbReference type="HOGENOM" id="CLU_022398_0_2_6"/>
<dbReference type="Proteomes" id="UP000006743">
    <property type="component" value="Chromosome"/>
</dbReference>
<dbReference type="GO" id="GO:0005886">
    <property type="term" value="C:plasma membrane"/>
    <property type="evidence" value="ECO:0007669"/>
    <property type="project" value="UniProtKB-SubCell"/>
</dbReference>
<dbReference type="GO" id="GO:0045259">
    <property type="term" value="C:proton-transporting ATP synthase complex"/>
    <property type="evidence" value="ECO:0007669"/>
    <property type="project" value="UniProtKB-KW"/>
</dbReference>
<dbReference type="GO" id="GO:0005524">
    <property type="term" value="F:ATP binding"/>
    <property type="evidence" value="ECO:0007669"/>
    <property type="project" value="UniProtKB-UniRule"/>
</dbReference>
<dbReference type="GO" id="GO:0016887">
    <property type="term" value="F:ATP hydrolysis activity"/>
    <property type="evidence" value="ECO:0007669"/>
    <property type="project" value="InterPro"/>
</dbReference>
<dbReference type="GO" id="GO:0046933">
    <property type="term" value="F:proton-transporting ATP synthase activity, rotational mechanism"/>
    <property type="evidence" value="ECO:0007669"/>
    <property type="project" value="UniProtKB-UniRule"/>
</dbReference>
<dbReference type="CDD" id="cd18110">
    <property type="entry name" value="ATP-synt_F1_beta_C"/>
    <property type="match status" value="1"/>
</dbReference>
<dbReference type="CDD" id="cd18115">
    <property type="entry name" value="ATP-synt_F1_beta_N"/>
    <property type="match status" value="1"/>
</dbReference>
<dbReference type="CDD" id="cd01133">
    <property type="entry name" value="F1-ATPase_beta_CD"/>
    <property type="match status" value="1"/>
</dbReference>
<dbReference type="FunFam" id="1.10.1140.10:FF:000001">
    <property type="entry name" value="ATP synthase subunit beta"/>
    <property type="match status" value="1"/>
</dbReference>
<dbReference type="FunFam" id="2.40.10.170:FF:000003">
    <property type="entry name" value="ATP synthase subunit beta"/>
    <property type="match status" value="1"/>
</dbReference>
<dbReference type="FunFam" id="3.40.50.300:FF:000004">
    <property type="entry name" value="ATP synthase subunit beta"/>
    <property type="match status" value="1"/>
</dbReference>
<dbReference type="Gene3D" id="2.40.10.170">
    <property type="match status" value="1"/>
</dbReference>
<dbReference type="Gene3D" id="1.10.1140.10">
    <property type="entry name" value="Bovine Mitochondrial F1-atpase, Atp Synthase Beta Chain, Chain D, domain 3"/>
    <property type="match status" value="1"/>
</dbReference>
<dbReference type="Gene3D" id="3.40.50.300">
    <property type="entry name" value="P-loop containing nucleotide triphosphate hydrolases"/>
    <property type="match status" value="1"/>
</dbReference>
<dbReference type="HAMAP" id="MF_01347">
    <property type="entry name" value="ATP_synth_beta_bact"/>
    <property type="match status" value="1"/>
</dbReference>
<dbReference type="InterPro" id="IPR003593">
    <property type="entry name" value="AAA+_ATPase"/>
</dbReference>
<dbReference type="InterPro" id="IPR055190">
    <property type="entry name" value="ATP-synt_VA_C"/>
</dbReference>
<dbReference type="InterPro" id="IPR005722">
    <property type="entry name" value="ATP_synth_F1_bsu"/>
</dbReference>
<dbReference type="InterPro" id="IPR020003">
    <property type="entry name" value="ATPase_a/bsu_AS"/>
</dbReference>
<dbReference type="InterPro" id="IPR050053">
    <property type="entry name" value="ATPase_alpha/beta_chains"/>
</dbReference>
<dbReference type="InterPro" id="IPR004100">
    <property type="entry name" value="ATPase_F1/V1/A1_a/bsu_N"/>
</dbReference>
<dbReference type="InterPro" id="IPR036121">
    <property type="entry name" value="ATPase_F1/V1/A1_a/bsu_N_sf"/>
</dbReference>
<dbReference type="InterPro" id="IPR000194">
    <property type="entry name" value="ATPase_F1/V1/A1_a/bsu_nucl-bd"/>
</dbReference>
<dbReference type="InterPro" id="IPR024034">
    <property type="entry name" value="ATPase_F1/V1_b/a_C"/>
</dbReference>
<dbReference type="InterPro" id="IPR027417">
    <property type="entry name" value="P-loop_NTPase"/>
</dbReference>
<dbReference type="NCBIfam" id="TIGR01039">
    <property type="entry name" value="atpD"/>
    <property type="match status" value="1"/>
</dbReference>
<dbReference type="PANTHER" id="PTHR15184">
    <property type="entry name" value="ATP SYNTHASE"/>
    <property type="match status" value="1"/>
</dbReference>
<dbReference type="PANTHER" id="PTHR15184:SF71">
    <property type="entry name" value="ATP SYNTHASE SUBUNIT BETA, MITOCHONDRIAL"/>
    <property type="match status" value="1"/>
</dbReference>
<dbReference type="Pfam" id="PF00006">
    <property type="entry name" value="ATP-synt_ab"/>
    <property type="match status" value="1"/>
</dbReference>
<dbReference type="Pfam" id="PF02874">
    <property type="entry name" value="ATP-synt_ab_N"/>
    <property type="match status" value="1"/>
</dbReference>
<dbReference type="Pfam" id="PF22919">
    <property type="entry name" value="ATP-synt_VA_C"/>
    <property type="match status" value="1"/>
</dbReference>
<dbReference type="SMART" id="SM00382">
    <property type="entry name" value="AAA"/>
    <property type="match status" value="1"/>
</dbReference>
<dbReference type="SUPFAM" id="SSF47917">
    <property type="entry name" value="C-terminal domain of alpha and beta subunits of F1 ATP synthase"/>
    <property type="match status" value="1"/>
</dbReference>
<dbReference type="SUPFAM" id="SSF50615">
    <property type="entry name" value="N-terminal domain of alpha and beta subunits of F1 ATP synthase"/>
    <property type="match status" value="1"/>
</dbReference>
<dbReference type="SUPFAM" id="SSF52540">
    <property type="entry name" value="P-loop containing nucleoside triphosphate hydrolases"/>
    <property type="match status" value="1"/>
</dbReference>
<dbReference type="PROSITE" id="PS00152">
    <property type="entry name" value="ATPASE_ALPHA_BETA"/>
    <property type="match status" value="1"/>
</dbReference>
<sequence>MATGKIVQIIGAVIDVEFPQDAVPKVYDALKVETGLTLEVQQQLGGGVVRCIALGTSDGLKRGLKVENTNKAIEVPVGTKTLGRIMNVLGEPIDEAGPIGEEERWTIHRAAPSYEEQANSTELLETGIKVIDLIAPFAKGGKVGLFGGAGVGKTVNMMELIRNIAIEHSGYSVFAGVGERTREGNDFYHEMKDSNVLDKVSLVYGQMNEPPGNRLRVALTGLTMAEKFRDEGRDVLFFVDNIYRYTLAGTEVSALLGRMPSAVGYQPTLAEEMGVLQERITSTKTGSITSVQAVYVPADDLTDPSPATTFAHLDSTVVLSRNIASLGIYPAIDPLDSTSRQLDPLVVGQEHYDVARGVQKTLQRYKELKDIIAILGMDELSEDDKLVVARARKIERFLSQPFHVAEVFNSVPGKFVPLKETIRGFKGILAGEYDHIPEQAFYMAGSIDEVVERANKM</sequence>
<feature type="chain" id="PRO_1000166593" description="ATP synthase subunit beta">
    <location>
        <begin position="1"/>
        <end position="457"/>
    </location>
</feature>
<feature type="binding site" evidence="1">
    <location>
        <begin position="147"/>
        <end position="154"/>
    </location>
    <ligand>
        <name>ATP</name>
        <dbReference type="ChEBI" id="CHEBI:30616"/>
    </ligand>
</feature>
<proteinExistence type="inferred from homology"/>
<gene>
    <name evidence="1" type="primary">atpD</name>
    <name type="ordered locus">HAPS_1626</name>
</gene>
<organism>
    <name type="scientific">Glaesserella parasuis serovar 5 (strain SH0165)</name>
    <name type="common">Haemophilus parasuis</name>
    <dbReference type="NCBI Taxonomy" id="557723"/>
    <lineage>
        <taxon>Bacteria</taxon>
        <taxon>Pseudomonadati</taxon>
        <taxon>Pseudomonadota</taxon>
        <taxon>Gammaproteobacteria</taxon>
        <taxon>Pasteurellales</taxon>
        <taxon>Pasteurellaceae</taxon>
        <taxon>Glaesserella</taxon>
    </lineage>
</organism>
<protein>
    <recommendedName>
        <fullName evidence="1">ATP synthase subunit beta</fullName>
        <ecNumber evidence="1">7.1.2.2</ecNumber>
    </recommendedName>
    <alternativeName>
        <fullName evidence="1">ATP synthase F1 sector subunit beta</fullName>
    </alternativeName>
    <alternativeName>
        <fullName evidence="1">F-ATPase subunit beta</fullName>
    </alternativeName>
</protein>
<name>ATPB_GLAP5</name>
<evidence type="ECO:0000255" key="1">
    <source>
        <dbReference type="HAMAP-Rule" id="MF_01347"/>
    </source>
</evidence>
<keyword id="KW-0066">ATP synthesis</keyword>
<keyword id="KW-0067">ATP-binding</keyword>
<keyword id="KW-0997">Cell inner membrane</keyword>
<keyword id="KW-1003">Cell membrane</keyword>
<keyword id="KW-0139">CF(1)</keyword>
<keyword id="KW-0375">Hydrogen ion transport</keyword>
<keyword id="KW-0406">Ion transport</keyword>
<keyword id="KW-0472">Membrane</keyword>
<keyword id="KW-0547">Nucleotide-binding</keyword>
<keyword id="KW-1185">Reference proteome</keyword>
<keyword id="KW-1278">Translocase</keyword>
<keyword id="KW-0813">Transport</keyword>